<reference key="1">
    <citation type="submission" date="2004-07" db="EMBL/GenBank/DDBJ databases">
        <title>Aspergillus fumigatus strain YJ-407 phosphomannose isomerase (pmi) mRNA.</title>
        <authorList>
            <person name="Yu X."/>
            <person name="Jin C."/>
        </authorList>
    </citation>
    <scope>NUCLEOTIDE SEQUENCE [MRNA]</scope>
    <source>
        <strain>YJ-407</strain>
    </source>
</reference>
<reference key="2">
    <citation type="journal article" date="2004" name="Fungal Genet. Biol.">
        <title>Insight into the genome of Aspergillus fumigatus: analysis of a 922 kb region encompassing the nitrate assimilation gene cluster.</title>
        <authorList>
            <person name="Pain A."/>
            <person name="Woodward J.R."/>
            <person name="Quail M.A."/>
            <person name="Anderson M.J."/>
            <person name="Clark R."/>
            <person name="Collins M."/>
            <person name="Fosker N."/>
            <person name="Fraser A."/>
            <person name="Harris D.E."/>
            <person name="Larke N."/>
            <person name="Murphy L.D."/>
            <person name="Humphray S."/>
            <person name="O'Neil S."/>
            <person name="Pertea M."/>
            <person name="Price C."/>
            <person name="Rabbinowitsch E."/>
            <person name="Rajandream M.A."/>
            <person name="Salzberg S.L."/>
            <person name="Saunders D."/>
            <person name="Seeger K."/>
            <person name="Sharp S."/>
            <person name="Warren T."/>
            <person name="Denning D.W."/>
            <person name="Barrell B.G."/>
            <person name="Hall N."/>
        </authorList>
    </citation>
    <scope>NUCLEOTIDE SEQUENCE [LARGE SCALE GENOMIC DNA]</scope>
    <source>
        <strain>ATCC MYA-4609 / CBS 101355 / FGSC A1100 / Af293</strain>
    </source>
</reference>
<reference key="3">
    <citation type="journal article" date="2005" name="Nature">
        <title>Genomic sequence of the pathogenic and allergenic filamentous fungus Aspergillus fumigatus.</title>
        <authorList>
            <person name="Nierman W.C."/>
            <person name="Pain A."/>
            <person name="Anderson M.J."/>
            <person name="Wortman J.R."/>
            <person name="Kim H.S."/>
            <person name="Arroyo J."/>
            <person name="Berriman M."/>
            <person name="Abe K."/>
            <person name="Archer D.B."/>
            <person name="Bermejo C."/>
            <person name="Bennett J.W."/>
            <person name="Bowyer P."/>
            <person name="Chen D."/>
            <person name="Collins M."/>
            <person name="Coulsen R."/>
            <person name="Davies R."/>
            <person name="Dyer P.S."/>
            <person name="Farman M.L."/>
            <person name="Fedorova N."/>
            <person name="Fedorova N.D."/>
            <person name="Feldblyum T.V."/>
            <person name="Fischer R."/>
            <person name="Fosker N."/>
            <person name="Fraser A."/>
            <person name="Garcia J.L."/>
            <person name="Garcia M.J."/>
            <person name="Goble A."/>
            <person name="Goldman G.H."/>
            <person name="Gomi K."/>
            <person name="Griffith-Jones S."/>
            <person name="Gwilliam R."/>
            <person name="Haas B.J."/>
            <person name="Haas H."/>
            <person name="Harris D.E."/>
            <person name="Horiuchi H."/>
            <person name="Huang J."/>
            <person name="Humphray S."/>
            <person name="Jimenez J."/>
            <person name="Keller N."/>
            <person name="Khouri H."/>
            <person name="Kitamoto K."/>
            <person name="Kobayashi T."/>
            <person name="Konzack S."/>
            <person name="Kulkarni R."/>
            <person name="Kumagai T."/>
            <person name="Lafton A."/>
            <person name="Latge J.-P."/>
            <person name="Li W."/>
            <person name="Lord A."/>
            <person name="Lu C."/>
            <person name="Majoros W.H."/>
            <person name="May G.S."/>
            <person name="Miller B.L."/>
            <person name="Mohamoud Y."/>
            <person name="Molina M."/>
            <person name="Monod M."/>
            <person name="Mouyna I."/>
            <person name="Mulligan S."/>
            <person name="Murphy L.D."/>
            <person name="O'Neil S."/>
            <person name="Paulsen I."/>
            <person name="Penalva M.A."/>
            <person name="Pertea M."/>
            <person name="Price C."/>
            <person name="Pritchard B.L."/>
            <person name="Quail M.A."/>
            <person name="Rabbinowitsch E."/>
            <person name="Rawlins N."/>
            <person name="Rajandream M.A."/>
            <person name="Reichard U."/>
            <person name="Renauld H."/>
            <person name="Robson G.D."/>
            <person name="Rodriguez de Cordoba S."/>
            <person name="Rodriguez-Pena J.M."/>
            <person name="Ronning C.M."/>
            <person name="Rutter S."/>
            <person name="Salzberg S.L."/>
            <person name="Sanchez M."/>
            <person name="Sanchez-Ferrero J.C."/>
            <person name="Saunders D."/>
            <person name="Seeger K."/>
            <person name="Squares R."/>
            <person name="Squares S."/>
            <person name="Takeuchi M."/>
            <person name="Tekaia F."/>
            <person name="Turner G."/>
            <person name="Vazquez de Aldana C.R."/>
            <person name="Weidman J."/>
            <person name="White O."/>
            <person name="Woodward J.R."/>
            <person name="Yu J.-H."/>
            <person name="Fraser C.M."/>
            <person name="Galagan J.E."/>
            <person name="Asai K."/>
            <person name="Machida M."/>
            <person name="Hall N."/>
            <person name="Barrell B.G."/>
            <person name="Denning D.W."/>
        </authorList>
    </citation>
    <scope>NUCLEOTIDE SEQUENCE [LARGE SCALE GENOMIC DNA]</scope>
    <source>
        <strain>ATCC MYA-4609 / CBS 101355 / FGSC A1100 / Af293</strain>
    </source>
</reference>
<name>MPI_ASPFU</name>
<gene>
    <name type="primary">pmi1</name>
    <name type="synonym">manA</name>
    <name type="ORF">AfA6E3.135c</name>
    <name type="ORF">AFUA_1G13280</name>
</gene>
<feature type="chain" id="PRO_0000194240" description="Mannose-6-phosphate isomerase">
    <location>
        <begin position="1"/>
        <end position="457"/>
    </location>
</feature>
<feature type="active site" evidence="1">
    <location>
        <position position="311"/>
    </location>
</feature>
<feature type="binding site" evidence="1">
    <location>
        <position position="108"/>
    </location>
    <ligand>
        <name>Zn(2+)</name>
        <dbReference type="ChEBI" id="CHEBI:29105"/>
    </ligand>
</feature>
<feature type="binding site" evidence="1">
    <location>
        <position position="110"/>
    </location>
    <ligand>
        <name>Zn(2+)</name>
        <dbReference type="ChEBI" id="CHEBI:29105"/>
    </ligand>
</feature>
<feature type="binding site" evidence="1">
    <location>
        <position position="135"/>
    </location>
    <ligand>
        <name>Zn(2+)</name>
        <dbReference type="ChEBI" id="CHEBI:29105"/>
    </ligand>
</feature>
<feature type="binding site" evidence="1">
    <location>
        <position position="292"/>
    </location>
    <ligand>
        <name>Zn(2+)</name>
        <dbReference type="ChEBI" id="CHEBI:29105"/>
    </ligand>
</feature>
<feature type="sequence conflict" description="In Ref. 1; AAU06585." evidence="2" ref="1">
    <original>I</original>
    <variation>V</variation>
    <location>
        <position position="80"/>
    </location>
</feature>
<proteinExistence type="evidence at transcript level"/>
<sequence length="457" mass="49930">MPPVPLLRLQCGVNSYDWGKVGHESAAAKYAATTAASDFSIQSDKPYAELWMGTHPSLPSKDLETQRTLLDMVQDNQALISQEVSERYGGKLPFLFKVLSIRKALSIQAHPNKKLAEKLHARDPRNYPDDNHKPEMTIAITPFEGLCGFRPLVEIIHFLKAVAPLRQLVGERAASEFENTVKGSEESEDPAVTEKNKQALRTLFTSLMRSSPESIEAATKELVAIAQNSPETFTTSSSTPETNPTNPAELAAITVRLNGQFPNDIGSFVFFFLNFVKLEPGEAMFLKADDIHAYISGDIIECMASSDNVVRAGFTPKFKDVDTLVDMLTYSYAPIAEQKLEPTDYPYAVLNAPAYSSGSSCILYDPPIEEFSVVKTDLKRQGAKATFDGISGPSIVICTAGAGKITVGPKTEEVNEGYVFFVGANAECIIESTGEDTFTTFKAFCDLTGKEDMVNGN</sequence>
<protein>
    <recommendedName>
        <fullName>Mannose-6-phosphate isomerase</fullName>
        <ecNumber>5.3.1.8</ecNumber>
    </recommendedName>
    <alternativeName>
        <fullName>Phosphohexomutase</fullName>
    </alternativeName>
    <alternativeName>
        <fullName>Phosphomannose isomerase</fullName>
        <shortName>PMI</shortName>
    </alternativeName>
</protein>
<organism>
    <name type="scientific">Aspergillus fumigatus (strain ATCC MYA-4609 / CBS 101355 / FGSC A1100 / Af293)</name>
    <name type="common">Neosartorya fumigata</name>
    <dbReference type="NCBI Taxonomy" id="330879"/>
    <lineage>
        <taxon>Eukaryota</taxon>
        <taxon>Fungi</taxon>
        <taxon>Dikarya</taxon>
        <taxon>Ascomycota</taxon>
        <taxon>Pezizomycotina</taxon>
        <taxon>Eurotiomycetes</taxon>
        <taxon>Eurotiomycetidae</taxon>
        <taxon>Eurotiales</taxon>
        <taxon>Aspergillaceae</taxon>
        <taxon>Aspergillus</taxon>
        <taxon>Aspergillus subgen. Fumigati</taxon>
    </lineage>
</organism>
<keyword id="KW-0963">Cytoplasm</keyword>
<keyword id="KW-0413">Isomerase</keyword>
<keyword id="KW-0479">Metal-binding</keyword>
<keyword id="KW-1185">Reference proteome</keyword>
<keyword id="KW-0862">Zinc</keyword>
<dbReference type="EC" id="5.3.1.8"/>
<dbReference type="EMBL" id="AY700212">
    <property type="protein sequence ID" value="AAU06585.1"/>
    <property type="molecule type" value="mRNA"/>
</dbReference>
<dbReference type="EMBL" id="BX649606">
    <property type="protein sequence ID" value="CAF32047.1"/>
    <property type="molecule type" value="Genomic_DNA"/>
</dbReference>
<dbReference type="EMBL" id="AAHF01000004">
    <property type="protein sequence ID" value="EAL90660.1"/>
    <property type="molecule type" value="Genomic_DNA"/>
</dbReference>
<dbReference type="RefSeq" id="XP_752698.1">
    <property type="nucleotide sequence ID" value="XM_747605.1"/>
</dbReference>
<dbReference type="SMR" id="Q66WM4"/>
<dbReference type="FunCoup" id="Q66WM4">
    <property type="interactions" value="848"/>
</dbReference>
<dbReference type="STRING" id="330879.Q66WM4"/>
<dbReference type="EnsemblFungi" id="EAL90660">
    <property type="protein sequence ID" value="EAL90660"/>
    <property type="gene ID" value="AFUA_1G13280"/>
</dbReference>
<dbReference type="GeneID" id="3510576"/>
<dbReference type="KEGG" id="afm:AFUA_1G13280"/>
<dbReference type="VEuPathDB" id="FungiDB:Afu1g13280"/>
<dbReference type="eggNOG" id="KOG2757">
    <property type="taxonomic scope" value="Eukaryota"/>
</dbReference>
<dbReference type="HOGENOM" id="CLU_026967_0_0_1"/>
<dbReference type="InParanoid" id="Q66WM4"/>
<dbReference type="OMA" id="DIGLFCG"/>
<dbReference type="OrthoDB" id="6605218at2759"/>
<dbReference type="BRENDA" id="5.3.1.8">
    <property type="organism ID" value="508"/>
</dbReference>
<dbReference type="UniPathway" id="UPA00126">
    <property type="reaction ID" value="UER00423"/>
</dbReference>
<dbReference type="Proteomes" id="UP000002530">
    <property type="component" value="Chromosome 1"/>
</dbReference>
<dbReference type="GO" id="GO:0005829">
    <property type="term" value="C:cytosol"/>
    <property type="evidence" value="ECO:0000318"/>
    <property type="project" value="GO_Central"/>
</dbReference>
<dbReference type="GO" id="GO:0004476">
    <property type="term" value="F:mannose-6-phosphate isomerase activity"/>
    <property type="evidence" value="ECO:0000314"/>
    <property type="project" value="AspGD"/>
</dbReference>
<dbReference type="GO" id="GO:0008270">
    <property type="term" value="F:zinc ion binding"/>
    <property type="evidence" value="ECO:0007669"/>
    <property type="project" value="InterPro"/>
</dbReference>
<dbReference type="GO" id="GO:0000032">
    <property type="term" value="P:cell wall mannoprotein biosynthetic process"/>
    <property type="evidence" value="ECO:0007669"/>
    <property type="project" value="EnsemblFungi"/>
</dbReference>
<dbReference type="GO" id="GO:0009298">
    <property type="term" value="P:GDP-mannose biosynthetic process"/>
    <property type="evidence" value="ECO:0000318"/>
    <property type="project" value="GO_Central"/>
</dbReference>
<dbReference type="GO" id="GO:0006013">
    <property type="term" value="P:mannose metabolic process"/>
    <property type="evidence" value="ECO:0000315"/>
    <property type="project" value="AspGD"/>
</dbReference>
<dbReference type="GO" id="GO:0006486">
    <property type="term" value="P:protein glycosylation"/>
    <property type="evidence" value="ECO:0007669"/>
    <property type="project" value="EnsemblFungi"/>
</dbReference>
<dbReference type="CDD" id="cd07011">
    <property type="entry name" value="cupin_PMI_type_I_N"/>
    <property type="match status" value="1"/>
</dbReference>
<dbReference type="FunFam" id="1.10.441.10:FF:000001">
    <property type="entry name" value="Mannose-6-phosphate isomerase"/>
    <property type="match status" value="1"/>
</dbReference>
<dbReference type="FunFam" id="2.60.120.10:FF:000136">
    <property type="entry name" value="Mannose-6-phosphate isomerase"/>
    <property type="match status" value="1"/>
</dbReference>
<dbReference type="Gene3D" id="2.60.120.10">
    <property type="entry name" value="Jelly Rolls"/>
    <property type="match status" value="2"/>
</dbReference>
<dbReference type="Gene3D" id="1.10.441.10">
    <property type="entry name" value="Phosphomannose Isomerase, domain 2"/>
    <property type="match status" value="1"/>
</dbReference>
<dbReference type="InterPro" id="IPR001250">
    <property type="entry name" value="Man6P_Isoase-1"/>
</dbReference>
<dbReference type="InterPro" id="IPR016305">
    <property type="entry name" value="Mannose-6-P_Isomerase"/>
</dbReference>
<dbReference type="InterPro" id="IPR018050">
    <property type="entry name" value="Pmannose_isomerase-type1_CS"/>
</dbReference>
<dbReference type="InterPro" id="IPR046456">
    <property type="entry name" value="PMI_typeI_C"/>
</dbReference>
<dbReference type="InterPro" id="IPR046457">
    <property type="entry name" value="PMI_typeI_cat"/>
</dbReference>
<dbReference type="InterPro" id="IPR046458">
    <property type="entry name" value="PMI_typeI_hel"/>
</dbReference>
<dbReference type="InterPro" id="IPR014710">
    <property type="entry name" value="RmlC-like_jellyroll"/>
</dbReference>
<dbReference type="InterPro" id="IPR011051">
    <property type="entry name" value="RmlC_Cupin_sf"/>
</dbReference>
<dbReference type="NCBIfam" id="TIGR00218">
    <property type="entry name" value="manA"/>
    <property type="match status" value="1"/>
</dbReference>
<dbReference type="PANTHER" id="PTHR10309">
    <property type="entry name" value="MANNOSE-6-PHOSPHATE ISOMERASE"/>
    <property type="match status" value="1"/>
</dbReference>
<dbReference type="PANTHER" id="PTHR10309:SF0">
    <property type="entry name" value="MANNOSE-6-PHOSPHATE ISOMERASE"/>
    <property type="match status" value="1"/>
</dbReference>
<dbReference type="Pfam" id="PF01238">
    <property type="entry name" value="PMI_typeI_C"/>
    <property type="match status" value="1"/>
</dbReference>
<dbReference type="Pfam" id="PF20511">
    <property type="entry name" value="PMI_typeI_cat"/>
    <property type="match status" value="1"/>
</dbReference>
<dbReference type="Pfam" id="PF20512">
    <property type="entry name" value="PMI_typeI_hel"/>
    <property type="match status" value="1"/>
</dbReference>
<dbReference type="PIRSF" id="PIRSF001480">
    <property type="entry name" value="Mannose-6-phosphate_isomerase"/>
    <property type="match status" value="1"/>
</dbReference>
<dbReference type="PRINTS" id="PR00714">
    <property type="entry name" value="MAN6PISMRASE"/>
</dbReference>
<dbReference type="SUPFAM" id="SSF51182">
    <property type="entry name" value="RmlC-like cupins"/>
    <property type="match status" value="1"/>
</dbReference>
<dbReference type="PROSITE" id="PS00965">
    <property type="entry name" value="PMI_I_1"/>
    <property type="match status" value="1"/>
</dbReference>
<dbReference type="PROSITE" id="PS00966">
    <property type="entry name" value="PMI_I_2"/>
    <property type="match status" value="1"/>
</dbReference>
<comment type="function">
    <text evidence="1">Involved in the synthesis of the GDP-mannose and dolichol-phosphate-mannose required for a number of critical mannosyl transfer reactions.</text>
</comment>
<comment type="catalytic activity">
    <reaction>
        <text>D-mannose 6-phosphate = D-fructose 6-phosphate</text>
        <dbReference type="Rhea" id="RHEA:12356"/>
        <dbReference type="ChEBI" id="CHEBI:58735"/>
        <dbReference type="ChEBI" id="CHEBI:61527"/>
        <dbReference type="EC" id="5.3.1.8"/>
    </reaction>
</comment>
<comment type="cofactor">
    <cofactor evidence="1">
        <name>Zn(2+)</name>
        <dbReference type="ChEBI" id="CHEBI:29105"/>
    </cofactor>
    <text evidence="1">Binds 1 zinc ion per subunit.</text>
</comment>
<comment type="pathway">
    <text>Nucleotide-sugar biosynthesis; GDP-alpha-D-mannose biosynthesis; alpha-D-mannose 1-phosphate from D-fructose 6-phosphate: step 1/2.</text>
</comment>
<comment type="subcellular location">
    <subcellularLocation>
        <location evidence="1">Cytoplasm</location>
    </subcellularLocation>
</comment>
<comment type="similarity">
    <text evidence="2">Belongs to the mannose-6-phosphate isomerase type 1 family.</text>
</comment>
<accession>Q66WM4</accession>
<accession>Q4WSC2</accession>
<accession>Q6MYF6</accession>
<evidence type="ECO:0000250" key="1"/>
<evidence type="ECO:0000305" key="2"/>